<sequence>MSQLEQKLTEMLTAPVEALGFEMVGIEFVRAGKHSTMRVYIDHPDGISVDHCAEVSHQVSAVLDVEDPINTEYNLEVSSPGMERPLFKLQHYIESVGEVVTLRLKMPMGDRRNFKGKLLSEADGMLTIEVDNQEFVLAFANIEKGNVVPTFD</sequence>
<gene>
    <name evidence="1" type="primary">rimP</name>
    <name type="ordered locus">Patl_1693</name>
</gene>
<feature type="chain" id="PRO_1000064747" description="Ribosome maturation factor RimP">
    <location>
        <begin position="1"/>
        <end position="152"/>
    </location>
</feature>
<accession>Q15V74</accession>
<evidence type="ECO:0000255" key="1">
    <source>
        <dbReference type="HAMAP-Rule" id="MF_01077"/>
    </source>
</evidence>
<dbReference type="EMBL" id="CP000388">
    <property type="protein sequence ID" value="ABG40214.1"/>
    <property type="molecule type" value="Genomic_DNA"/>
</dbReference>
<dbReference type="RefSeq" id="WP_011574519.1">
    <property type="nucleotide sequence ID" value="NC_008228.1"/>
</dbReference>
<dbReference type="SMR" id="Q15V74"/>
<dbReference type="STRING" id="342610.Patl_1693"/>
<dbReference type="KEGG" id="pat:Patl_1693"/>
<dbReference type="eggNOG" id="COG0779">
    <property type="taxonomic scope" value="Bacteria"/>
</dbReference>
<dbReference type="HOGENOM" id="CLU_070525_1_1_6"/>
<dbReference type="OrthoDB" id="9805006at2"/>
<dbReference type="Proteomes" id="UP000001981">
    <property type="component" value="Chromosome"/>
</dbReference>
<dbReference type="GO" id="GO:0005829">
    <property type="term" value="C:cytosol"/>
    <property type="evidence" value="ECO:0007669"/>
    <property type="project" value="TreeGrafter"/>
</dbReference>
<dbReference type="GO" id="GO:0000028">
    <property type="term" value="P:ribosomal small subunit assembly"/>
    <property type="evidence" value="ECO:0007669"/>
    <property type="project" value="TreeGrafter"/>
</dbReference>
<dbReference type="GO" id="GO:0006412">
    <property type="term" value="P:translation"/>
    <property type="evidence" value="ECO:0007669"/>
    <property type="project" value="TreeGrafter"/>
</dbReference>
<dbReference type="CDD" id="cd01734">
    <property type="entry name" value="YlxS_C"/>
    <property type="match status" value="1"/>
</dbReference>
<dbReference type="FunFam" id="3.30.300.70:FF:000001">
    <property type="entry name" value="Ribosome maturation factor RimP"/>
    <property type="match status" value="1"/>
</dbReference>
<dbReference type="Gene3D" id="2.30.30.180">
    <property type="entry name" value="Ribosome maturation factor RimP, C-terminal domain"/>
    <property type="match status" value="1"/>
</dbReference>
<dbReference type="Gene3D" id="3.30.300.70">
    <property type="entry name" value="RimP-like superfamily, N-terminal"/>
    <property type="match status" value="1"/>
</dbReference>
<dbReference type="HAMAP" id="MF_01077">
    <property type="entry name" value="RimP"/>
    <property type="match status" value="1"/>
</dbReference>
<dbReference type="InterPro" id="IPR003728">
    <property type="entry name" value="Ribosome_maturation_RimP"/>
</dbReference>
<dbReference type="InterPro" id="IPR028998">
    <property type="entry name" value="RimP_C"/>
</dbReference>
<dbReference type="InterPro" id="IPR036847">
    <property type="entry name" value="RimP_C_sf"/>
</dbReference>
<dbReference type="InterPro" id="IPR028989">
    <property type="entry name" value="RimP_N"/>
</dbReference>
<dbReference type="InterPro" id="IPR035956">
    <property type="entry name" value="RimP_N_sf"/>
</dbReference>
<dbReference type="NCBIfam" id="NF000927">
    <property type="entry name" value="PRK00092.1-1"/>
    <property type="match status" value="1"/>
</dbReference>
<dbReference type="PANTHER" id="PTHR33867">
    <property type="entry name" value="RIBOSOME MATURATION FACTOR RIMP"/>
    <property type="match status" value="1"/>
</dbReference>
<dbReference type="PANTHER" id="PTHR33867:SF1">
    <property type="entry name" value="RIBOSOME MATURATION FACTOR RIMP"/>
    <property type="match status" value="1"/>
</dbReference>
<dbReference type="Pfam" id="PF17384">
    <property type="entry name" value="DUF150_C"/>
    <property type="match status" value="1"/>
</dbReference>
<dbReference type="Pfam" id="PF02576">
    <property type="entry name" value="RimP_N"/>
    <property type="match status" value="1"/>
</dbReference>
<dbReference type="SUPFAM" id="SSF74942">
    <property type="entry name" value="YhbC-like, C-terminal domain"/>
    <property type="match status" value="1"/>
</dbReference>
<dbReference type="SUPFAM" id="SSF75420">
    <property type="entry name" value="YhbC-like, N-terminal domain"/>
    <property type="match status" value="1"/>
</dbReference>
<protein>
    <recommendedName>
        <fullName evidence="1">Ribosome maturation factor RimP</fullName>
    </recommendedName>
</protein>
<comment type="function">
    <text evidence="1">Required for maturation of 30S ribosomal subunits.</text>
</comment>
<comment type="subcellular location">
    <subcellularLocation>
        <location evidence="1">Cytoplasm</location>
    </subcellularLocation>
</comment>
<comment type="similarity">
    <text evidence="1">Belongs to the RimP family.</text>
</comment>
<proteinExistence type="inferred from homology"/>
<name>RIMP_PSEA6</name>
<organism>
    <name type="scientific">Pseudoalteromonas atlantica (strain T6c / ATCC BAA-1087)</name>
    <dbReference type="NCBI Taxonomy" id="3042615"/>
    <lineage>
        <taxon>Bacteria</taxon>
        <taxon>Pseudomonadati</taxon>
        <taxon>Pseudomonadota</taxon>
        <taxon>Gammaproteobacteria</taxon>
        <taxon>Alteromonadales</taxon>
        <taxon>Alteromonadaceae</taxon>
        <taxon>Paraglaciecola</taxon>
    </lineage>
</organism>
<keyword id="KW-0963">Cytoplasm</keyword>
<keyword id="KW-0690">Ribosome biogenesis</keyword>
<reference key="1">
    <citation type="submission" date="2006-06" db="EMBL/GenBank/DDBJ databases">
        <title>Complete sequence of Pseudoalteromonas atlantica T6c.</title>
        <authorList>
            <consortium name="US DOE Joint Genome Institute"/>
            <person name="Copeland A."/>
            <person name="Lucas S."/>
            <person name="Lapidus A."/>
            <person name="Barry K."/>
            <person name="Detter J.C."/>
            <person name="Glavina del Rio T."/>
            <person name="Hammon N."/>
            <person name="Israni S."/>
            <person name="Dalin E."/>
            <person name="Tice H."/>
            <person name="Pitluck S."/>
            <person name="Saunders E."/>
            <person name="Brettin T."/>
            <person name="Bruce D."/>
            <person name="Han C."/>
            <person name="Tapia R."/>
            <person name="Gilna P."/>
            <person name="Schmutz J."/>
            <person name="Larimer F."/>
            <person name="Land M."/>
            <person name="Hauser L."/>
            <person name="Kyrpides N."/>
            <person name="Kim E."/>
            <person name="Karls A.C."/>
            <person name="Bartlett D."/>
            <person name="Higgins B.P."/>
            <person name="Richardson P."/>
        </authorList>
    </citation>
    <scope>NUCLEOTIDE SEQUENCE [LARGE SCALE GENOMIC DNA]</scope>
    <source>
        <strain>T6c / ATCC BAA-1087</strain>
    </source>
</reference>